<comment type="function">
    <text evidence="1">Catalyzes the isomerization between 2-isopropylmalate and 3-isopropylmalate, via the formation of 2-isopropylmaleate.</text>
</comment>
<comment type="catalytic activity">
    <reaction evidence="1">
        <text>(2R,3S)-3-isopropylmalate = (2S)-2-isopropylmalate</text>
        <dbReference type="Rhea" id="RHEA:32287"/>
        <dbReference type="ChEBI" id="CHEBI:1178"/>
        <dbReference type="ChEBI" id="CHEBI:35121"/>
        <dbReference type="EC" id="4.2.1.33"/>
    </reaction>
</comment>
<comment type="pathway">
    <text evidence="1">Amino-acid biosynthesis; L-leucine biosynthesis; L-leucine from 3-methyl-2-oxobutanoate: step 2/4.</text>
</comment>
<comment type="subunit">
    <text evidence="1">Heterodimer of LeuC and LeuD.</text>
</comment>
<comment type="similarity">
    <text evidence="1">Belongs to the LeuD family. LeuD type 1 subfamily.</text>
</comment>
<sequence>MTIHTRIEGMAAPLPVSNLDTDQIMPKQFLRRIDKAGLAEGLLYDMRFGPDGKPRPEFVLNRPEYAAARILVAGPNFGCGSSREHAVWGLMQYGIQAVIAPSFGEIFYSNAMNNSLMLVALAEADVGTILADVSAPENSWITIDVASMTVRSKSLTASFSLSERHRRMFLEGLDMIGATLAMQDQIHAFAARHWQQRPWLKDIASMTKNRLA</sequence>
<accession>Q7NW22</accession>
<name>LEUD1_CHRVO</name>
<feature type="chain" id="PRO_0000141810" description="3-isopropylmalate dehydratase small subunit 1">
    <location>
        <begin position="1"/>
        <end position="212"/>
    </location>
</feature>
<dbReference type="EC" id="4.2.1.33" evidence="1"/>
<dbReference type="EMBL" id="AE016825">
    <property type="protein sequence ID" value="AAQ59841.1"/>
    <property type="molecule type" value="Genomic_DNA"/>
</dbReference>
<dbReference type="RefSeq" id="WP_011135716.1">
    <property type="nucleotide sequence ID" value="NC_005085.1"/>
</dbReference>
<dbReference type="SMR" id="Q7NW22"/>
<dbReference type="STRING" id="243365.CV_2168"/>
<dbReference type="KEGG" id="cvi:CV_2168"/>
<dbReference type="eggNOG" id="COG0066">
    <property type="taxonomic scope" value="Bacteria"/>
</dbReference>
<dbReference type="HOGENOM" id="CLU_081378_0_3_4"/>
<dbReference type="OrthoDB" id="9777465at2"/>
<dbReference type="UniPathway" id="UPA00048">
    <property type="reaction ID" value="UER00071"/>
</dbReference>
<dbReference type="Proteomes" id="UP000001424">
    <property type="component" value="Chromosome"/>
</dbReference>
<dbReference type="GO" id="GO:0009316">
    <property type="term" value="C:3-isopropylmalate dehydratase complex"/>
    <property type="evidence" value="ECO:0007669"/>
    <property type="project" value="InterPro"/>
</dbReference>
<dbReference type="GO" id="GO:0003861">
    <property type="term" value="F:3-isopropylmalate dehydratase activity"/>
    <property type="evidence" value="ECO:0007669"/>
    <property type="project" value="UniProtKB-UniRule"/>
</dbReference>
<dbReference type="GO" id="GO:0009098">
    <property type="term" value="P:L-leucine biosynthetic process"/>
    <property type="evidence" value="ECO:0007669"/>
    <property type="project" value="UniProtKB-UniRule"/>
</dbReference>
<dbReference type="CDD" id="cd01577">
    <property type="entry name" value="IPMI_Swivel"/>
    <property type="match status" value="1"/>
</dbReference>
<dbReference type="FunFam" id="3.20.19.10:FF:000003">
    <property type="entry name" value="3-isopropylmalate dehydratase small subunit"/>
    <property type="match status" value="1"/>
</dbReference>
<dbReference type="Gene3D" id="3.20.19.10">
    <property type="entry name" value="Aconitase, domain 4"/>
    <property type="match status" value="1"/>
</dbReference>
<dbReference type="HAMAP" id="MF_01031">
    <property type="entry name" value="LeuD_type1"/>
    <property type="match status" value="1"/>
</dbReference>
<dbReference type="InterPro" id="IPR004431">
    <property type="entry name" value="3-IsopropMal_deHydase_ssu"/>
</dbReference>
<dbReference type="InterPro" id="IPR015928">
    <property type="entry name" value="Aconitase/3IPM_dehydase_swvl"/>
</dbReference>
<dbReference type="InterPro" id="IPR000573">
    <property type="entry name" value="AconitaseA/IPMdHydase_ssu_swvl"/>
</dbReference>
<dbReference type="InterPro" id="IPR033940">
    <property type="entry name" value="IPMI_Swivel"/>
</dbReference>
<dbReference type="InterPro" id="IPR050075">
    <property type="entry name" value="LeuD"/>
</dbReference>
<dbReference type="NCBIfam" id="TIGR00171">
    <property type="entry name" value="leuD"/>
    <property type="match status" value="1"/>
</dbReference>
<dbReference type="NCBIfam" id="NF002458">
    <property type="entry name" value="PRK01641.1"/>
    <property type="match status" value="1"/>
</dbReference>
<dbReference type="PANTHER" id="PTHR43345:SF5">
    <property type="entry name" value="3-ISOPROPYLMALATE DEHYDRATASE SMALL SUBUNIT"/>
    <property type="match status" value="1"/>
</dbReference>
<dbReference type="PANTHER" id="PTHR43345">
    <property type="entry name" value="3-ISOPROPYLMALATE DEHYDRATASE SMALL SUBUNIT 2-RELATED-RELATED"/>
    <property type="match status" value="1"/>
</dbReference>
<dbReference type="Pfam" id="PF00694">
    <property type="entry name" value="Aconitase_C"/>
    <property type="match status" value="1"/>
</dbReference>
<dbReference type="SUPFAM" id="SSF52016">
    <property type="entry name" value="LeuD/IlvD-like"/>
    <property type="match status" value="1"/>
</dbReference>
<proteinExistence type="inferred from homology"/>
<keyword id="KW-0028">Amino-acid biosynthesis</keyword>
<keyword id="KW-0100">Branched-chain amino acid biosynthesis</keyword>
<keyword id="KW-0432">Leucine biosynthesis</keyword>
<keyword id="KW-0456">Lyase</keyword>
<keyword id="KW-1185">Reference proteome</keyword>
<evidence type="ECO:0000255" key="1">
    <source>
        <dbReference type="HAMAP-Rule" id="MF_01031"/>
    </source>
</evidence>
<organism>
    <name type="scientific">Chromobacterium violaceum (strain ATCC 12472 / DSM 30191 / JCM 1249 / CCUG 213 / NBRC 12614 / NCIMB 9131 / NCTC 9757 / MK)</name>
    <dbReference type="NCBI Taxonomy" id="243365"/>
    <lineage>
        <taxon>Bacteria</taxon>
        <taxon>Pseudomonadati</taxon>
        <taxon>Pseudomonadota</taxon>
        <taxon>Betaproteobacteria</taxon>
        <taxon>Neisseriales</taxon>
        <taxon>Chromobacteriaceae</taxon>
        <taxon>Chromobacterium</taxon>
    </lineage>
</organism>
<protein>
    <recommendedName>
        <fullName evidence="1">3-isopropylmalate dehydratase small subunit 1</fullName>
        <ecNumber evidence="1">4.2.1.33</ecNumber>
    </recommendedName>
    <alternativeName>
        <fullName evidence="1">Alpha-IPM isomerase 1</fullName>
        <shortName evidence="1">IPMI 1</shortName>
    </alternativeName>
    <alternativeName>
        <fullName evidence="1">Isopropylmalate isomerase 1</fullName>
    </alternativeName>
</protein>
<reference key="1">
    <citation type="journal article" date="2003" name="Proc. Natl. Acad. Sci. U.S.A.">
        <title>The complete genome sequence of Chromobacterium violaceum reveals remarkable and exploitable bacterial adaptability.</title>
        <authorList>
            <person name="Vasconcelos A.T.R."/>
            <person name="de Almeida D.F."/>
            <person name="Hungria M."/>
            <person name="Guimaraes C.T."/>
            <person name="Antonio R.V."/>
            <person name="Almeida F.C."/>
            <person name="de Almeida L.G.P."/>
            <person name="de Almeida R."/>
            <person name="Alves-Gomes J.A."/>
            <person name="Andrade E.M."/>
            <person name="Araripe J."/>
            <person name="de Araujo M.F.F."/>
            <person name="Astolfi-Filho S."/>
            <person name="Azevedo V."/>
            <person name="Baptista A.J."/>
            <person name="Bataus L.A.M."/>
            <person name="Batista J.S."/>
            <person name="Belo A."/>
            <person name="van den Berg C."/>
            <person name="Bogo M."/>
            <person name="Bonatto S."/>
            <person name="Bordignon J."/>
            <person name="Brigido M.M."/>
            <person name="Brito C.A."/>
            <person name="Brocchi M."/>
            <person name="Burity H.A."/>
            <person name="Camargo A.A."/>
            <person name="Cardoso D.D.P."/>
            <person name="Carneiro N.P."/>
            <person name="Carraro D.M."/>
            <person name="Carvalho C.M.B."/>
            <person name="Cascardo J.C.M."/>
            <person name="Cavada B.S."/>
            <person name="Chueire L.M.O."/>
            <person name="Creczynski-Pasa T.B."/>
            <person name="Cunha-Junior N.C."/>
            <person name="Fagundes N."/>
            <person name="Falcao C.L."/>
            <person name="Fantinatti F."/>
            <person name="Farias I.P."/>
            <person name="Felipe M.S.S."/>
            <person name="Ferrari L.P."/>
            <person name="Ferro J.A."/>
            <person name="Ferro M.I.T."/>
            <person name="Franco G.R."/>
            <person name="Freitas N.S.A."/>
            <person name="Furlan L.R."/>
            <person name="Gazzinelli R.T."/>
            <person name="Gomes E.A."/>
            <person name="Goncalves P.R."/>
            <person name="Grangeiro T.B."/>
            <person name="Grattapaglia D."/>
            <person name="Grisard E.C."/>
            <person name="Hanna E.S."/>
            <person name="Jardim S.N."/>
            <person name="Laurino J."/>
            <person name="Leoi L.C.T."/>
            <person name="Lima L.F.A."/>
            <person name="Loureiro M.F."/>
            <person name="Lyra M.C.C.P."/>
            <person name="Madeira H.M.F."/>
            <person name="Manfio G.P."/>
            <person name="Maranhao A.Q."/>
            <person name="Martins W.S."/>
            <person name="di Mauro S.M.Z."/>
            <person name="de Medeiros S.R.B."/>
            <person name="Meissner R.V."/>
            <person name="Moreira M.A.M."/>
            <person name="Nascimento F.F."/>
            <person name="Nicolas M.F."/>
            <person name="Oliveira J.G."/>
            <person name="Oliveira S.C."/>
            <person name="Paixao R.F.C."/>
            <person name="Parente J.A."/>
            <person name="Pedrosa F.O."/>
            <person name="Pena S.D.J."/>
            <person name="Pereira J.O."/>
            <person name="Pereira M."/>
            <person name="Pinto L.S.R.C."/>
            <person name="Pinto L.S."/>
            <person name="Porto J.I.R."/>
            <person name="Potrich D.P."/>
            <person name="Ramalho-Neto C.E."/>
            <person name="Reis A.M.M."/>
            <person name="Rigo L.U."/>
            <person name="Rondinelli E."/>
            <person name="Santos E.B.P."/>
            <person name="Santos F.R."/>
            <person name="Schneider M.P.C."/>
            <person name="Seuanez H.N."/>
            <person name="Silva A.M.R."/>
            <person name="da Silva A.L.C."/>
            <person name="Silva D.W."/>
            <person name="Silva R."/>
            <person name="Simoes I.C."/>
            <person name="Simon D."/>
            <person name="Soares C.M.A."/>
            <person name="Soares R.B.A."/>
            <person name="Souza E.M."/>
            <person name="Souza K.R.L."/>
            <person name="Souza R.C."/>
            <person name="Steffens M.B.R."/>
            <person name="Steindel M."/>
            <person name="Teixeira S.R."/>
            <person name="Urmenyi T."/>
            <person name="Vettore A."/>
            <person name="Wassem R."/>
            <person name="Zaha A."/>
            <person name="Simpson A.J.G."/>
        </authorList>
    </citation>
    <scope>NUCLEOTIDE SEQUENCE [LARGE SCALE GENOMIC DNA]</scope>
    <source>
        <strain>ATCC 12472 / DSM 30191 / JCM 1249 / CCUG 213 / NBRC 12614 / NCIMB 9131 / NCTC 9757 / MK</strain>
    </source>
</reference>
<gene>
    <name evidence="1" type="primary">leuD1</name>
    <name type="ordered locus">CV_2168</name>
</gene>